<comment type="function">
    <text evidence="1">Catalyzes the oxidative ring opening of 3-hydroxyanthranilate to 2-amino-3-carboxymuconate semialdehyde, which spontaneously cyclizes to quinolinate.</text>
</comment>
<comment type="catalytic activity">
    <reaction evidence="1">
        <text>3-hydroxyanthranilate + O2 = (2Z,4Z)-2-amino-3-carboxymuconate 6-semialdehyde</text>
        <dbReference type="Rhea" id="RHEA:17953"/>
        <dbReference type="ChEBI" id="CHEBI:15379"/>
        <dbReference type="ChEBI" id="CHEBI:36559"/>
        <dbReference type="ChEBI" id="CHEBI:77612"/>
        <dbReference type="EC" id="1.13.11.6"/>
    </reaction>
</comment>
<comment type="cofactor">
    <cofactor evidence="1">
        <name>Fe(2+)</name>
        <dbReference type="ChEBI" id="CHEBI:29033"/>
    </cofactor>
</comment>
<comment type="pathway">
    <text evidence="1">Cofactor biosynthesis; NAD(+) biosynthesis; quinolinate from L-kynurenine: step 3/3.</text>
</comment>
<comment type="subcellular location">
    <subcellularLocation>
        <location evidence="1">Cytoplasm</location>
    </subcellularLocation>
</comment>
<comment type="similarity">
    <text evidence="1">Belongs to the 3-HAO family.</text>
</comment>
<name>3HAO1_ASPCL</name>
<keyword id="KW-0963">Cytoplasm</keyword>
<keyword id="KW-0223">Dioxygenase</keyword>
<keyword id="KW-0408">Iron</keyword>
<keyword id="KW-0479">Metal-binding</keyword>
<keyword id="KW-0560">Oxidoreductase</keyword>
<keyword id="KW-0662">Pyridine nucleotide biosynthesis</keyword>
<keyword id="KW-1185">Reference proteome</keyword>
<evidence type="ECO:0000255" key="1">
    <source>
        <dbReference type="HAMAP-Rule" id="MF_03019"/>
    </source>
</evidence>
<dbReference type="EC" id="1.13.11.6" evidence="1"/>
<dbReference type="EMBL" id="DS026990">
    <property type="protein sequence ID" value="EAW15148.1"/>
    <property type="molecule type" value="Genomic_DNA"/>
</dbReference>
<dbReference type="RefSeq" id="XP_001276574.1">
    <property type="nucleotide sequence ID" value="XM_001276573.1"/>
</dbReference>
<dbReference type="SMR" id="A1C408"/>
<dbReference type="STRING" id="344612.A1C408"/>
<dbReference type="EnsemblFungi" id="EAW15148">
    <property type="protein sequence ID" value="EAW15148"/>
    <property type="gene ID" value="ACLA_058050"/>
</dbReference>
<dbReference type="GeneID" id="4708890"/>
<dbReference type="KEGG" id="act:ACLA_058050"/>
<dbReference type="VEuPathDB" id="FungiDB:ACLA_058050"/>
<dbReference type="eggNOG" id="KOG3995">
    <property type="taxonomic scope" value="Eukaryota"/>
</dbReference>
<dbReference type="HOGENOM" id="CLU_095765_0_0_1"/>
<dbReference type="OMA" id="KPPVGNQ"/>
<dbReference type="OrthoDB" id="204928at2759"/>
<dbReference type="UniPathway" id="UPA00253">
    <property type="reaction ID" value="UER00330"/>
</dbReference>
<dbReference type="Proteomes" id="UP000006701">
    <property type="component" value="Unassembled WGS sequence"/>
</dbReference>
<dbReference type="GO" id="GO:0005737">
    <property type="term" value="C:cytoplasm"/>
    <property type="evidence" value="ECO:0007669"/>
    <property type="project" value="UniProtKB-SubCell"/>
</dbReference>
<dbReference type="GO" id="GO:0000334">
    <property type="term" value="F:3-hydroxyanthranilate 3,4-dioxygenase activity"/>
    <property type="evidence" value="ECO:0007669"/>
    <property type="project" value="UniProtKB-UniRule"/>
</dbReference>
<dbReference type="GO" id="GO:0008198">
    <property type="term" value="F:ferrous iron binding"/>
    <property type="evidence" value="ECO:0007669"/>
    <property type="project" value="UniProtKB-UniRule"/>
</dbReference>
<dbReference type="GO" id="GO:0034354">
    <property type="term" value="P:'de novo' NAD biosynthetic process from L-tryptophan"/>
    <property type="evidence" value="ECO:0007669"/>
    <property type="project" value="UniProtKB-UniRule"/>
</dbReference>
<dbReference type="GO" id="GO:0043420">
    <property type="term" value="P:anthranilate metabolic process"/>
    <property type="evidence" value="ECO:0007669"/>
    <property type="project" value="UniProtKB-UniRule"/>
</dbReference>
<dbReference type="GO" id="GO:0006569">
    <property type="term" value="P:L-tryptophan catabolic process"/>
    <property type="evidence" value="ECO:0007669"/>
    <property type="project" value="UniProtKB-UniRule"/>
</dbReference>
<dbReference type="GO" id="GO:0019805">
    <property type="term" value="P:quinolinate biosynthetic process"/>
    <property type="evidence" value="ECO:0007669"/>
    <property type="project" value="UniProtKB-UniRule"/>
</dbReference>
<dbReference type="CDD" id="cd06123">
    <property type="entry name" value="cupin_HAO"/>
    <property type="match status" value="1"/>
</dbReference>
<dbReference type="FunFam" id="2.60.120.10:FF:000093">
    <property type="entry name" value="3-hydroxyanthranilate 3,4-dioxygenase"/>
    <property type="match status" value="1"/>
</dbReference>
<dbReference type="Gene3D" id="2.60.120.10">
    <property type="entry name" value="Jelly Rolls"/>
    <property type="match status" value="1"/>
</dbReference>
<dbReference type="HAMAP" id="MF_00825">
    <property type="entry name" value="3_HAO"/>
    <property type="match status" value="1"/>
</dbReference>
<dbReference type="InterPro" id="IPR010329">
    <property type="entry name" value="3hydroanth_dOase"/>
</dbReference>
<dbReference type="InterPro" id="IPR014710">
    <property type="entry name" value="RmlC-like_jellyroll"/>
</dbReference>
<dbReference type="InterPro" id="IPR011051">
    <property type="entry name" value="RmlC_Cupin_sf"/>
</dbReference>
<dbReference type="NCBIfam" id="TIGR03037">
    <property type="entry name" value="anthran_nbaC"/>
    <property type="match status" value="1"/>
</dbReference>
<dbReference type="PANTHER" id="PTHR15497">
    <property type="entry name" value="3-HYDROXYANTHRANILATE 3,4-DIOXYGENASE"/>
    <property type="match status" value="1"/>
</dbReference>
<dbReference type="PANTHER" id="PTHR15497:SF1">
    <property type="entry name" value="3-HYDROXYANTHRANILATE 3,4-DIOXYGENASE"/>
    <property type="match status" value="1"/>
</dbReference>
<dbReference type="Pfam" id="PF06052">
    <property type="entry name" value="3-HAO"/>
    <property type="match status" value="1"/>
</dbReference>
<dbReference type="SUPFAM" id="SSF51182">
    <property type="entry name" value="RmlC-like cupins"/>
    <property type="match status" value="1"/>
</dbReference>
<reference key="1">
    <citation type="journal article" date="2008" name="PLoS Genet.">
        <title>Genomic islands in the pathogenic filamentous fungus Aspergillus fumigatus.</title>
        <authorList>
            <person name="Fedorova N.D."/>
            <person name="Khaldi N."/>
            <person name="Joardar V.S."/>
            <person name="Maiti R."/>
            <person name="Amedeo P."/>
            <person name="Anderson M.J."/>
            <person name="Crabtree J."/>
            <person name="Silva J.C."/>
            <person name="Badger J.H."/>
            <person name="Albarraq A."/>
            <person name="Angiuoli S."/>
            <person name="Bussey H."/>
            <person name="Bowyer P."/>
            <person name="Cotty P.J."/>
            <person name="Dyer P.S."/>
            <person name="Egan A."/>
            <person name="Galens K."/>
            <person name="Fraser-Liggett C.M."/>
            <person name="Haas B.J."/>
            <person name="Inman J.M."/>
            <person name="Kent R."/>
            <person name="Lemieux S."/>
            <person name="Malavazi I."/>
            <person name="Orvis J."/>
            <person name="Roemer T."/>
            <person name="Ronning C.M."/>
            <person name="Sundaram J.P."/>
            <person name="Sutton G."/>
            <person name="Turner G."/>
            <person name="Venter J.C."/>
            <person name="White O.R."/>
            <person name="Whitty B.R."/>
            <person name="Youngman P."/>
            <person name="Wolfe K.H."/>
            <person name="Goldman G.H."/>
            <person name="Wortman J.R."/>
            <person name="Jiang B."/>
            <person name="Denning D.W."/>
            <person name="Nierman W.C."/>
        </authorList>
    </citation>
    <scope>NUCLEOTIDE SEQUENCE [LARGE SCALE GENOMIC DNA]</scope>
    <source>
        <strain>ATCC 1007 / CBS 513.65 / DSM 816 / NCTC 3887 / NRRL 1 / QM 1276 / 107</strain>
    </source>
</reference>
<protein>
    <recommendedName>
        <fullName evidence="1">3-hydroxyanthranilate 3,4-dioxygenase 1</fullName>
        <ecNumber evidence="1">1.13.11.6</ecNumber>
    </recommendedName>
    <alternativeName>
        <fullName evidence="1">3-hydroxyanthranilate oxygenase 1</fullName>
        <shortName evidence="1">3-HAO-1</shortName>
    </alternativeName>
    <alternativeName>
        <fullName evidence="1">3-hydroxyanthranilic acid dioxygenase 1</fullName>
        <shortName evidence="1">HAD-1</shortName>
    </alternativeName>
    <alternativeName>
        <fullName evidence="1">Biosynthesis of nicotinic acid protein 1-1</fullName>
    </alternativeName>
</protein>
<gene>
    <name type="primary">bna1-1</name>
    <name type="ORF">ACLA_058050</name>
</gene>
<proteinExistence type="inferred from homology"/>
<sequence>MLPPALNIPKWLEANSHLLQPPVNNYCVYHPSSPATAGYTVMIVGGPNARTDYHINTTPEFFYQYRGSMLLKTVDTSVSPPVFQDIPIHEGSIFLLPANTPHCPVRFKDTVGVVMEQPRAEGAVDQMRWYCRGCGEIVWEKQFVCTDLGTQVKEVVEEFGADQEKRTCKACGTIAETRFKEGEIVQPPRFVE</sequence>
<organism>
    <name type="scientific">Aspergillus clavatus (strain ATCC 1007 / CBS 513.65 / DSM 816 / NCTC 3887 / NRRL 1 / QM 1276 / 107)</name>
    <dbReference type="NCBI Taxonomy" id="344612"/>
    <lineage>
        <taxon>Eukaryota</taxon>
        <taxon>Fungi</taxon>
        <taxon>Dikarya</taxon>
        <taxon>Ascomycota</taxon>
        <taxon>Pezizomycotina</taxon>
        <taxon>Eurotiomycetes</taxon>
        <taxon>Eurotiomycetidae</taxon>
        <taxon>Eurotiales</taxon>
        <taxon>Aspergillaceae</taxon>
        <taxon>Aspergillus</taxon>
        <taxon>Aspergillus subgen. Fumigati</taxon>
    </lineage>
</organism>
<accession>A1C408</accession>
<feature type="chain" id="PRO_0000361974" description="3-hydroxyanthranilate 3,4-dioxygenase 1">
    <location>
        <begin position="1"/>
        <end position="192"/>
    </location>
</feature>
<feature type="binding site" evidence="1">
    <location>
        <position position="50"/>
    </location>
    <ligand>
        <name>O2</name>
        <dbReference type="ChEBI" id="CHEBI:15379"/>
    </ligand>
</feature>
<feature type="binding site" evidence="1">
    <location>
        <position position="54"/>
    </location>
    <ligand>
        <name>Fe cation</name>
        <dbReference type="ChEBI" id="CHEBI:24875"/>
        <note>catalytic</note>
    </ligand>
</feature>
<feature type="binding site" evidence="1">
    <location>
        <position position="60"/>
    </location>
    <ligand>
        <name>Fe cation</name>
        <dbReference type="ChEBI" id="CHEBI:24875"/>
        <note>catalytic</note>
    </ligand>
</feature>
<feature type="binding site" evidence="1">
    <location>
        <position position="60"/>
    </location>
    <ligand>
        <name>substrate</name>
    </ligand>
</feature>
<feature type="binding site" evidence="1">
    <location>
        <position position="102"/>
    </location>
    <ligand>
        <name>Fe cation</name>
        <dbReference type="ChEBI" id="CHEBI:24875"/>
        <note>catalytic</note>
    </ligand>
</feature>
<feature type="binding site" evidence="1">
    <location>
        <position position="106"/>
    </location>
    <ligand>
        <name>substrate</name>
    </ligand>
</feature>
<feature type="binding site" evidence="1">
    <location>
        <position position="116"/>
    </location>
    <ligand>
        <name>substrate</name>
    </ligand>
</feature>
<feature type="binding site" evidence="1">
    <location>
        <position position="131"/>
    </location>
    <ligand>
        <name>a divalent metal cation</name>
        <dbReference type="ChEBI" id="CHEBI:60240"/>
    </ligand>
</feature>
<feature type="binding site" evidence="1">
    <location>
        <position position="134"/>
    </location>
    <ligand>
        <name>a divalent metal cation</name>
        <dbReference type="ChEBI" id="CHEBI:60240"/>
    </ligand>
</feature>
<feature type="binding site" evidence="1">
    <location>
        <position position="168"/>
    </location>
    <ligand>
        <name>a divalent metal cation</name>
        <dbReference type="ChEBI" id="CHEBI:60240"/>
    </ligand>
</feature>
<feature type="binding site" evidence="1">
    <location>
        <position position="171"/>
    </location>
    <ligand>
        <name>a divalent metal cation</name>
        <dbReference type="ChEBI" id="CHEBI:60240"/>
    </ligand>
</feature>